<accession>B5RCF2</accession>
<evidence type="ECO:0000255" key="1">
    <source>
        <dbReference type="HAMAP-Rule" id="MF_01356"/>
    </source>
</evidence>
<reference key="1">
    <citation type="journal article" date="2008" name="Genome Res.">
        <title>Comparative genome analysis of Salmonella enteritidis PT4 and Salmonella gallinarum 287/91 provides insights into evolutionary and host adaptation pathways.</title>
        <authorList>
            <person name="Thomson N.R."/>
            <person name="Clayton D.J."/>
            <person name="Windhorst D."/>
            <person name="Vernikos G."/>
            <person name="Davidson S."/>
            <person name="Churcher C."/>
            <person name="Quail M.A."/>
            <person name="Stevens M."/>
            <person name="Jones M.A."/>
            <person name="Watson M."/>
            <person name="Barron A."/>
            <person name="Layton A."/>
            <person name="Pickard D."/>
            <person name="Kingsley R.A."/>
            <person name="Bignell A."/>
            <person name="Clark L."/>
            <person name="Harris B."/>
            <person name="Ormond D."/>
            <person name="Abdellah Z."/>
            <person name="Brooks K."/>
            <person name="Cherevach I."/>
            <person name="Chillingworth T."/>
            <person name="Woodward J."/>
            <person name="Norberczak H."/>
            <person name="Lord A."/>
            <person name="Arrowsmith C."/>
            <person name="Jagels K."/>
            <person name="Moule S."/>
            <person name="Mungall K."/>
            <person name="Saunders M."/>
            <person name="Whitehead S."/>
            <person name="Chabalgoity J.A."/>
            <person name="Maskell D."/>
            <person name="Humphreys T."/>
            <person name="Roberts M."/>
            <person name="Barrow P.A."/>
            <person name="Dougan G."/>
            <person name="Parkhill J."/>
        </authorList>
    </citation>
    <scope>NUCLEOTIDE SEQUENCE [LARGE SCALE GENOMIC DNA]</scope>
    <source>
        <strain>287/91 / NCTC 13346</strain>
    </source>
</reference>
<comment type="function">
    <text evidence="1">NDH-1 shuttles electrons from NADH, via FMN and iron-sulfur (Fe-S) centers, to quinones in the respiratory chain. The immediate electron acceptor for the enzyme in this species is believed to be ubiquinone. Couples the redox reaction to proton translocation (for every two electrons transferred, four hydrogen ions are translocated across the cytoplasmic membrane), and thus conserves the redox energy in a proton gradient.</text>
</comment>
<comment type="catalytic activity">
    <reaction evidence="1">
        <text>a quinone + NADH + 5 H(+)(in) = a quinol + NAD(+) + 4 H(+)(out)</text>
        <dbReference type="Rhea" id="RHEA:57888"/>
        <dbReference type="ChEBI" id="CHEBI:15378"/>
        <dbReference type="ChEBI" id="CHEBI:24646"/>
        <dbReference type="ChEBI" id="CHEBI:57540"/>
        <dbReference type="ChEBI" id="CHEBI:57945"/>
        <dbReference type="ChEBI" id="CHEBI:132124"/>
    </reaction>
</comment>
<comment type="cofactor">
    <cofactor evidence="1">
        <name>[4Fe-4S] cluster</name>
        <dbReference type="ChEBI" id="CHEBI:49883"/>
    </cofactor>
    <text evidence="1">Binds 1 [4Fe-4S] cluster.</text>
</comment>
<comment type="subunit">
    <text evidence="1">NDH-1 is composed of 13 different subunits. Subunits NuoB, CD, E, F, and G constitute the peripheral sector of the complex.</text>
</comment>
<comment type="subcellular location">
    <subcellularLocation>
        <location evidence="1">Cell inner membrane</location>
        <topology evidence="1">Peripheral membrane protein</topology>
        <orientation evidence="1">Cytoplasmic side</orientation>
    </subcellularLocation>
</comment>
<comment type="similarity">
    <text evidence="1">Belongs to the complex I 20 kDa subunit family.</text>
</comment>
<organism>
    <name type="scientific">Salmonella gallinarum (strain 287/91 / NCTC 13346)</name>
    <dbReference type="NCBI Taxonomy" id="550538"/>
    <lineage>
        <taxon>Bacteria</taxon>
        <taxon>Pseudomonadati</taxon>
        <taxon>Pseudomonadota</taxon>
        <taxon>Gammaproteobacteria</taxon>
        <taxon>Enterobacterales</taxon>
        <taxon>Enterobacteriaceae</taxon>
        <taxon>Salmonella</taxon>
    </lineage>
</organism>
<gene>
    <name evidence="1" type="primary">nuoB</name>
    <name type="ordered locus">SG2356</name>
</gene>
<name>NUOB_SALG2</name>
<feature type="chain" id="PRO_0000376364" description="NADH-quinone oxidoreductase subunit B">
    <location>
        <begin position="1"/>
        <end position="220"/>
    </location>
</feature>
<feature type="binding site" evidence="1">
    <location>
        <position position="63"/>
    </location>
    <ligand>
        <name>[4Fe-4S] cluster</name>
        <dbReference type="ChEBI" id="CHEBI:49883"/>
    </ligand>
</feature>
<feature type="binding site" evidence="1">
    <location>
        <position position="64"/>
    </location>
    <ligand>
        <name>[4Fe-4S] cluster</name>
        <dbReference type="ChEBI" id="CHEBI:49883"/>
    </ligand>
</feature>
<feature type="binding site" evidence="1">
    <location>
        <position position="129"/>
    </location>
    <ligand>
        <name>[4Fe-4S] cluster</name>
        <dbReference type="ChEBI" id="CHEBI:49883"/>
    </ligand>
</feature>
<feature type="binding site" evidence="1">
    <location>
        <position position="158"/>
    </location>
    <ligand>
        <name>[4Fe-4S] cluster</name>
        <dbReference type="ChEBI" id="CHEBI:49883"/>
    </ligand>
</feature>
<keyword id="KW-0004">4Fe-4S</keyword>
<keyword id="KW-0997">Cell inner membrane</keyword>
<keyword id="KW-1003">Cell membrane</keyword>
<keyword id="KW-0408">Iron</keyword>
<keyword id="KW-0411">Iron-sulfur</keyword>
<keyword id="KW-0472">Membrane</keyword>
<keyword id="KW-0479">Metal-binding</keyword>
<keyword id="KW-0520">NAD</keyword>
<keyword id="KW-0874">Quinone</keyword>
<keyword id="KW-1278">Translocase</keyword>
<keyword id="KW-0813">Transport</keyword>
<keyword id="KW-0830">Ubiquinone</keyword>
<sequence length="220" mass="25089">MDYTLTRIDPNGENDRYPLQKQEIVTDPLEQEVNKNVFMGKLHDMVNWGRKNSIWPYNFGLSCCYVEMVTSFTAVHDVARFGAEVLRASPRQADLMVVAGTCFTKMAPVIQRLYDQMLEPKWVISMGACANSGGMYDIYSVVQGVDKFIPVDVYIPGCPPRPEAYMQALMLLQESIGKERRPLSWVVGDQGVYRANMQPERERKRGERIAVTNLRTPDEI</sequence>
<dbReference type="EC" id="7.1.1.-" evidence="1"/>
<dbReference type="EMBL" id="AM933173">
    <property type="protein sequence ID" value="CAR38186.1"/>
    <property type="molecule type" value="Genomic_DNA"/>
</dbReference>
<dbReference type="RefSeq" id="WP_000386728.1">
    <property type="nucleotide sequence ID" value="NC_011274.1"/>
</dbReference>
<dbReference type="SMR" id="B5RCF2"/>
<dbReference type="KEGG" id="seg:SG2356"/>
<dbReference type="HOGENOM" id="CLU_055737_7_3_6"/>
<dbReference type="Proteomes" id="UP000008321">
    <property type="component" value="Chromosome"/>
</dbReference>
<dbReference type="GO" id="GO:0005886">
    <property type="term" value="C:plasma membrane"/>
    <property type="evidence" value="ECO:0007669"/>
    <property type="project" value="UniProtKB-SubCell"/>
</dbReference>
<dbReference type="GO" id="GO:0045271">
    <property type="term" value="C:respiratory chain complex I"/>
    <property type="evidence" value="ECO:0007669"/>
    <property type="project" value="TreeGrafter"/>
</dbReference>
<dbReference type="GO" id="GO:0051539">
    <property type="term" value="F:4 iron, 4 sulfur cluster binding"/>
    <property type="evidence" value="ECO:0007669"/>
    <property type="project" value="UniProtKB-KW"/>
</dbReference>
<dbReference type="GO" id="GO:0005506">
    <property type="term" value="F:iron ion binding"/>
    <property type="evidence" value="ECO:0007669"/>
    <property type="project" value="UniProtKB-UniRule"/>
</dbReference>
<dbReference type="GO" id="GO:0008137">
    <property type="term" value="F:NADH dehydrogenase (ubiquinone) activity"/>
    <property type="evidence" value="ECO:0007669"/>
    <property type="project" value="InterPro"/>
</dbReference>
<dbReference type="GO" id="GO:0050136">
    <property type="term" value="F:NADH:ubiquinone reductase (non-electrogenic) activity"/>
    <property type="evidence" value="ECO:0007669"/>
    <property type="project" value="UniProtKB-UniRule"/>
</dbReference>
<dbReference type="GO" id="GO:0048038">
    <property type="term" value="F:quinone binding"/>
    <property type="evidence" value="ECO:0007669"/>
    <property type="project" value="UniProtKB-KW"/>
</dbReference>
<dbReference type="GO" id="GO:0009060">
    <property type="term" value="P:aerobic respiration"/>
    <property type="evidence" value="ECO:0007669"/>
    <property type="project" value="TreeGrafter"/>
</dbReference>
<dbReference type="GO" id="GO:0015990">
    <property type="term" value="P:electron transport coupled proton transport"/>
    <property type="evidence" value="ECO:0007669"/>
    <property type="project" value="TreeGrafter"/>
</dbReference>
<dbReference type="FunFam" id="3.40.50.12280:FF:000002">
    <property type="entry name" value="NADH-quinone oxidoreductase subunit B"/>
    <property type="match status" value="1"/>
</dbReference>
<dbReference type="Gene3D" id="3.40.50.12280">
    <property type="match status" value="1"/>
</dbReference>
<dbReference type="HAMAP" id="MF_01356">
    <property type="entry name" value="NDH1_NuoB"/>
    <property type="match status" value="1"/>
</dbReference>
<dbReference type="InterPro" id="IPR006137">
    <property type="entry name" value="NADH_UbQ_OxRdtase-like_20kDa"/>
</dbReference>
<dbReference type="InterPro" id="IPR006138">
    <property type="entry name" value="NADH_UQ_OxRdtase_20Kd_su"/>
</dbReference>
<dbReference type="NCBIfam" id="TIGR01957">
    <property type="entry name" value="nuoB_fam"/>
    <property type="match status" value="1"/>
</dbReference>
<dbReference type="NCBIfam" id="NF005012">
    <property type="entry name" value="PRK06411.1"/>
    <property type="match status" value="1"/>
</dbReference>
<dbReference type="PANTHER" id="PTHR11995">
    <property type="entry name" value="NADH DEHYDROGENASE"/>
    <property type="match status" value="1"/>
</dbReference>
<dbReference type="PANTHER" id="PTHR11995:SF14">
    <property type="entry name" value="NADH DEHYDROGENASE [UBIQUINONE] IRON-SULFUR PROTEIN 7, MITOCHONDRIAL"/>
    <property type="match status" value="1"/>
</dbReference>
<dbReference type="Pfam" id="PF01058">
    <property type="entry name" value="Oxidored_q6"/>
    <property type="match status" value="1"/>
</dbReference>
<dbReference type="SUPFAM" id="SSF56770">
    <property type="entry name" value="HydA/Nqo6-like"/>
    <property type="match status" value="1"/>
</dbReference>
<dbReference type="PROSITE" id="PS01150">
    <property type="entry name" value="COMPLEX1_20K"/>
    <property type="match status" value="1"/>
</dbReference>
<proteinExistence type="inferred from homology"/>
<protein>
    <recommendedName>
        <fullName evidence="1">NADH-quinone oxidoreductase subunit B</fullName>
        <ecNumber evidence="1">7.1.1.-</ecNumber>
    </recommendedName>
    <alternativeName>
        <fullName evidence="1">NADH dehydrogenase I subunit B</fullName>
    </alternativeName>
    <alternativeName>
        <fullName evidence="1">NDH-1 subunit B</fullName>
    </alternativeName>
</protein>